<keyword id="KW-0687">Ribonucleoprotein</keyword>
<keyword id="KW-0689">Ribosomal protein</keyword>
<keyword id="KW-0694">RNA-binding</keyword>
<keyword id="KW-0699">rRNA-binding</keyword>
<comment type="function">
    <text evidence="1">Binds the lower part of the 30S subunit head. Binds mRNA in the 70S ribosome, positioning it for translation.</text>
</comment>
<comment type="subunit">
    <text evidence="1">Part of the 30S ribosomal subunit. Forms a tight complex with proteins S10 and S14.</text>
</comment>
<comment type="similarity">
    <text evidence="1">Belongs to the universal ribosomal protein uS3 family.</text>
</comment>
<accession>B4TXD6</accession>
<reference key="1">
    <citation type="journal article" date="2011" name="J. Bacteriol.">
        <title>Comparative genomics of 28 Salmonella enterica isolates: evidence for CRISPR-mediated adaptive sublineage evolution.</title>
        <authorList>
            <person name="Fricke W.F."/>
            <person name="Mammel M.K."/>
            <person name="McDermott P.F."/>
            <person name="Tartera C."/>
            <person name="White D.G."/>
            <person name="Leclerc J.E."/>
            <person name="Ravel J."/>
            <person name="Cebula T.A."/>
        </authorList>
    </citation>
    <scope>NUCLEOTIDE SEQUENCE [LARGE SCALE GENOMIC DNA]</scope>
    <source>
        <strain>CVM19633</strain>
    </source>
</reference>
<dbReference type="EMBL" id="CP001127">
    <property type="protein sequence ID" value="ACF92569.1"/>
    <property type="molecule type" value="Genomic_DNA"/>
</dbReference>
<dbReference type="RefSeq" id="WP_000529945.1">
    <property type="nucleotide sequence ID" value="NC_011094.1"/>
</dbReference>
<dbReference type="SMR" id="B4TXD6"/>
<dbReference type="GeneID" id="97603663"/>
<dbReference type="KEGG" id="sew:SeSA_A3630"/>
<dbReference type="HOGENOM" id="CLU_058591_0_2_6"/>
<dbReference type="Proteomes" id="UP000001865">
    <property type="component" value="Chromosome"/>
</dbReference>
<dbReference type="GO" id="GO:0022627">
    <property type="term" value="C:cytosolic small ribosomal subunit"/>
    <property type="evidence" value="ECO:0007669"/>
    <property type="project" value="TreeGrafter"/>
</dbReference>
<dbReference type="GO" id="GO:0003729">
    <property type="term" value="F:mRNA binding"/>
    <property type="evidence" value="ECO:0007669"/>
    <property type="project" value="UniProtKB-UniRule"/>
</dbReference>
<dbReference type="GO" id="GO:0019843">
    <property type="term" value="F:rRNA binding"/>
    <property type="evidence" value="ECO:0007669"/>
    <property type="project" value="UniProtKB-UniRule"/>
</dbReference>
<dbReference type="GO" id="GO:0003735">
    <property type="term" value="F:structural constituent of ribosome"/>
    <property type="evidence" value="ECO:0007669"/>
    <property type="project" value="InterPro"/>
</dbReference>
<dbReference type="GO" id="GO:0006412">
    <property type="term" value="P:translation"/>
    <property type="evidence" value="ECO:0007669"/>
    <property type="project" value="UniProtKB-UniRule"/>
</dbReference>
<dbReference type="CDD" id="cd02412">
    <property type="entry name" value="KH-II_30S_S3"/>
    <property type="match status" value="1"/>
</dbReference>
<dbReference type="FunFam" id="3.30.1140.32:FF:000001">
    <property type="entry name" value="30S ribosomal protein S3"/>
    <property type="match status" value="1"/>
</dbReference>
<dbReference type="FunFam" id="3.30.300.20:FF:000001">
    <property type="entry name" value="30S ribosomal protein S3"/>
    <property type="match status" value="1"/>
</dbReference>
<dbReference type="Gene3D" id="3.30.300.20">
    <property type="match status" value="1"/>
</dbReference>
<dbReference type="Gene3D" id="3.30.1140.32">
    <property type="entry name" value="Ribosomal protein S3, C-terminal domain"/>
    <property type="match status" value="1"/>
</dbReference>
<dbReference type="HAMAP" id="MF_01309_B">
    <property type="entry name" value="Ribosomal_uS3_B"/>
    <property type="match status" value="1"/>
</dbReference>
<dbReference type="InterPro" id="IPR004087">
    <property type="entry name" value="KH_dom"/>
</dbReference>
<dbReference type="InterPro" id="IPR015946">
    <property type="entry name" value="KH_dom-like_a/b"/>
</dbReference>
<dbReference type="InterPro" id="IPR004044">
    <property type="entry name" value="KH_dom_type_2"/>
</dbReference>
<dbReference type="InterPro" id="IPR009019">
    <property type="entry name" value="KH_sf_prok-type"/>
</dbReference>
<dbReference type="InterPro" id="IPR036419">
    <property type="entry name" value="Ribosomal_S3_C_sf"/>
</dbReference>
<dbReference type="InterPro" id="IPR005704">
    <property type="entry name" value="Ribosomal_uS3_bac-typ"/>
</dbReference>
<dbReference type="InterPro" id="IPR001351">
    <property type="entry name" value="Ribosomal_uS3_C"/>
</dbReference>
<dbReference type="InterPro" id="IPR018280">
    <property type="entry name" value="Ribosomal_uS3_CS"/>
</dbReference>
<dbReference type="NCBIfam" id="TIGR01009">
    <property type="entry name" value="rpsC_bact"/>
    <property type="match status" value="1"/>
</dbReference>
<dbReference type="PANTHER" id="PTHR11760">
    <property type="entry name" value="30S/40S RIBOSOMAL PROTEIN S3"/>
    <property type="match status" value="1"/>
</dbReference>
<dbReference type="PANTHER" id="PTHR11760:SF19">
    <property type="entry name" value="SMALL RIBOSOMAL SUBUNIT PROTEIN US3C"/>
    <property type="match status" value="1"/>
</dbReference>
<dbReference type="Pfam" id="PF07650">
    <property type="entry name" value="KH_2"/>
    <property type="match status" value="1"/>
</dbReference>
<dbReference type="Pfam" id="PF00189">
    <property type="entry name" value="Ribosomal_S3_C"/>
    <property type="match status" value="1"/>
</dbReference>
<dbReference type="SMART" id="SM00322">
    <property type="entry name" value="KH"/>
    <property type="match status" value="1"/>
</dbReference>
<dbReference type="SUPFAM" id="SSF54814">
    <property type="entry name" value="Prokaryotic type KH domain (KH-domain type II)"/>
    <property type="match status" value="1"/>
</dbReference>
<dbReference type="SUPFAM" id="SSF54821">
    <property type="entry name" value="Ribosomal protein S3 C-terminal domain"/>
    <property type="match status" value="1"/>
</dbReference>
<dbReference type="PROSITE" id="PS50823">
    <property type="entry name" value="KH_TYPE_2"/>
    <property type="match status" value="1"/>
</dbReference>
<dbReference type="PROSITE" id="PS00548">
    <property type="entry name" value="RIBOSOMAL_S3"/>
    <property type="match status" value="1"/>
</dbReference>
<organism>
    <name type="scientific">Salmonella schwarzengrund (strain CVM19633)</name>
    <dbReference type="NCBI Taxonomy" id="439843"/>
    <lineage>
        <taxon>Bacteria</taxon>
        <taxon>Pseudomonadati</taxon>
        <taxon>Pseudomonadota</taxon>
        <taxon>Gammaproteobacteria</taxon>
        <taxon>Enterobacterales</taxon>
        <taxon>Enterobacteriaceae</taxon>
        <taxon>Salmonella</taxon>
    </lineage>
</organism>
<feature type="chain" id="PRO_1000141017" description="Small ribosomal subunit protein uS3">
    <location>
        <begin position="1"/>
        <end position="233"/>
    </location>
</feature>
<feature type="domain" description="KH type-2" evidence="1">
    <location>
        <begin position="39"/>
        <end position="107"/>
    </location>
</feature>
<sequence length="233" mass="25983">MGQKVHPNGIRLGIVKPWNSTWFANTKEFADNLDSDFKVRQYLTKELAKASVSRIVIERPAKSIRVTIHTARPGIVIGKKGEDVEKLRKVVADIAGVPAQINIAEVRKPELDAKLVADSITSQLERRVMFRRAMKRAVQNAMRLGAKGIKVEVSGRLGGAEIARTEWYREGRVPLHTLRADIDYNTSEAHTTYGVIGVKVWIFKGEILGGMAAVEQPEKPAAQPKKQQRKGRK</sequence>
<proteinExistence type="inferred from homology"/>
<protein>
    <recommendedName>
        <fullName evidence="1">Small ribosomal subunit protein uS3</fullName>
    </recommendedName>
    <alternativeName>
        <fullName evidence="2">30S ribosomal protein S3</fullName>
    </alternativeName>
</protein>
<evidence type="ECO:0000255" key="1">
    <source>
        <dbReference type="HAMAP-Rule" id="MF_01309"/>
    </source>
</evidence>
<evidence type="ECO:0000305" key="2"/>
<gene>
    <name evidence="1" type="primary">rpsC</name>
    <name type="ordered locus">SeSA_A3630</name>
</gene>
<name>RS3_SALSV</name>